<comment type="function">
    <text>PsaA and PsaB bind P700, the primary electron donor of photosystem I (PSI), as well as the electron acceptors A0, A1 and FX. PSI is a plastocyanin-ferredoxin oxidoreductase, converting photonic excitation into a charge separation, which transfers an electron from the donor P700 chlorophyll pair to the spectroscopically characterized acceptors A0, A1, FX, FA and FB in turn. Oxidized P700 is reduced on the lumenal side of the thylakoid membrane by plastocyanin.</text>
</comment>
<comment type="catalytic activity">
    <reaction evidence="1">
        <text>reduced [plastocyanin] + hnu + oxidized [2Fe-2S]-[ferredoxin] = oxidized [plastocyanin] + reduced [2Fe-2S]-[ferredoxin]</text>
        <dbReference type="Rhea" id="RHEA:30407"/>
        <dbReference type="Rhea" id="RHEA-COMP:10000"/>
        <dbReference type="Rhea" id="RHEA-COMP:10001"/>
        <dbReference type="Rhea" id="RHEA-COMP:10039"/>
        <dbReference type="Rhea" id="RHEA-COMP:10040"/>
        <dbReference type="ChEBI" id="CHEBI:29036"/>
        <dbReference type="ChEBI" id="CHEBI:30212"/>
        <dbReference type="ChEBI" id="CHEBI:33737"/>
        <dbReference type="ChEBI" id="CHEBI:33738"/>
        <dbReference type="ChEBI" id="CHEBI:49552"/>
        <dbReference type="EC" id="1.97.1.12"/>
    </reaction>
</comment>
<comment type="cofactor">
    <text evidence="1">P700 is a chlorophyll a/chlorophyll a' dimer, A0 is one or more chlorophyll a, A1 is one or both phylloquinones and FX is a shared 4Fe-4S iron-sulfur center.</text>
</comment>
<comment type="subunit">
    <text evidence="1">The PsaA/B heterodimer binds the P700 chlorophyll special pair and subsequent electron acceptors. PSI consists of a core antenna complex that captures photons, and an electron transfer chain that converts photonic excitation into a charge separation. The eukaryotic PSI reaction center is composed of at least 11 subunits.</text>
</comment>
<comment type="subcellular location">
    <subcellularLocation>
        <location evidence="1">Plastid</location>
        <location evidence="1">Chloroplast thylakoid membrane</location>
        <topology evidence="1">Multi-pass membrane protein</topology>
    </subcellularLocation>
</comment>
<comment type="similarity">
    <text evidence="1">Belongs to the PsaA/PsaB family.</text>
</comment>
<evidence type="ECO:0000255" key="1">
    <source>
        <dbReference type="HAMAP-Rule" id="MF_00458"/>
    </source>
</evidence>
<dbReference type="EC" id="1.97.1.12" evidence="1"/>
<dbReference type="EMBL" id="AP002983">
    <property type="protein sequence ID" value="BAB33186.1"/>
    <property type="molecule type" value="Genomic_DNA"/>
</dbReference>
<dbReference type="RefSeq" id="NP_084788.1">
    <property type="nucleotide sequence ID" value="NC_002694.1"/>
</dbReference>
<dbReference type="SMR" id="P58310"/>
<dbReference type="GeneID" id="802865"/>
<dbReference type="GO" id="GO:0009535">
    <property type="term" value="C:chloroplast thylakoid membrane"/>
    <property type="evidence" value="ECO:0007669"/>
    <property type="project" value="UniProtKB-SubCell"/>
</dbReference>
<dbReference type="GO" id="GO:0009522">
    <property type="term" value="C:photosystem I"/>
    <property type="evidence" value="ECO:0007669"/>
    <property type="project" value="UniProtKB-KW"/>
</dbReference>
<dbReference type="GO" id="GO:0051539">
    <property type="term" value="F:4 iron, 4 sulfur cluster binding"/>
    <property type="evidence" value="ECO:0007669"/>
    <property type="project" value="UniProtKB-KW"/>
</dbReference>
<dbReference type="GO" id="GO:0016168">
    <property type="term" value="F:chlorophyll binding"/>
    <property type="evidence" value="ECO:0007669"/>
    <property type="project" value="UniProtKB-KW"/>
</dbReference>
<dbReference type="GO" id="GO:0009055">
    <property type="term" value="F:electron transfer activity"/>
    <property type="evidence" value="ECO:0007669"/>
    <property type="project" value="UniProtKB-UniRule"/>
</dbReference>
<dbReference type="GO" id="GO:0000287">
    <property type="term" value="F:magnesium ion binding"/>
    <property type="evidence" value="ECO:0007669"/>
    <property type="project" value="UniProtKB-UniRule"/>
</dbReference>
<dbReference type="GO" id="GO:0016491">
    <property type="term" value="F:oxidoreductase activity"/>
    <property type="evidence" value="ECO:0007669"/>
    <property type="project" value="UniProtKB-KW"/>
</dbReference>
<dbReference type="GO" id="GO:0015979">
    <property type="term" value="P:photosynthesis"/>
    <property type="evidence" value="ECO:0007669"/>
    <property type="project" value="UniProtKB-UniRule"/>
</dbReference>
<dbReference type="FunFam" id="1.20.1130.10:FF:000001">
    <property type="entry name" value="Photosystem I P700 chlorophyll a apoprotein A2"/>
    <property type="match status" value="1"/>
</dbReference>
<dbReference type="Gene3D" id="1.20.1130.10">
    <property type="entry name" value="Photosystem I PsaA/PsaB"/>
    <property type="match status" value="1"/>
</dbReference>
<dbReference type="HAMAP" id="MF_00458">
    <property type="entry name" value="PSI_PsaA"/>
    <property type="match status" value="1"/>
</dbReference>
<dbReference type="InterPro" id="IPR006243">
    <property type="entry name" value="PSI_PsaA"/>
</dbReference>
<dbReference type="InterPro" id="IPR001280">
    <property type="entry name" value="PSI_PsaA/B"/>
</dbReference>
<dbReference type="InterPro" id="IPR020586">
    <property type="entry name" value="PSI_PsaA/B_CS"/>
</dbReference>
<dbReference type="InterPro" id="IPR036408">
    <property type="entry name" value="PSI_PsaA/B_sf"/>
</dbReference>
<dbReference type="NCBIfam" id="TIGR01335">
    <property type="entry name" value="psaA"/>
    <property type="match status" value="1"/>
</dbReference>
<dbReference type="PANTHER" id="PTHR30128">
    <property type="entry name" value="OUTER MEMBRANE PROTEIN, OMPA-RELATED"/>
    <property type="match status" value="1"/>
</dbReference>
<dbReference type="PANTHER" id="PTHR30128:SF19">
    <property type="entry name" value="PHOTOSYSTEM I P700 CHLOROPHYLL A APOPROTEIN A1-RELATED"/>
    <property type="match status" value="1"/>
</dbReference>
<dbReference type="Pfam" id="PF00223">
    <property type="entry name" value="PsaA_PsaB"/>
    <property type="match status" value="1"/>
</dbReference>
<dbReference type="PIRSF" id="PIRSF002905">
    <property type="entry name" value="PSI_A"/>
    <property type="match status" value="1"/>
</dbReference>
<dbReference type="PRINTS" id="PR00257">
    <property type="entry name" value="PHOTSYSPSAAB"/>
</dbReference>
<dbReference type="SUPFAM" id="SSF81558">
    <property type="entry name" value="Photosystem I subunits PsaA/PsaB"/>
    <property type="match status" value="1"/>
</dbReference>
<dbReference type="PROSITE" id="PS00419">
    <property type="entry name" value="PHOTOSYSTEM_I_PSAAB"/>
    <property type="match status" value="1"/>
</dbReference>
<keyword id="KW-0004">4Fe-4S</keyword>
<keyword id="KW-0148">Chlorophyll</keyword>
<keyword id="KW-0150">Chloroplast</keyword>
<keyword id="KW-0157">Chromophore</keyword>
<keyword id="KW-0249">Electron transport</keyword>
<keyword id="KW-0408">Iron</keyword>
<keyword id="KW-0411">Iron-sulfur</keyword>
<keyword id="KW-0460">Magnesium</keyword>
<keyword id="KW-0472">Membrane</keyword>
<keyword id="KW-0479">Metal-binding</keyword>
<keyword id="KW-0560">Oxidoreductase</keyword>
<keyword id="KW-0602">Photosynthesis</keyword>
<keyword id="KW-0603">Photosystem I</keyword>
<keyword id="KW-0934">Plastid</keyword>
<keyword id="KW-0793">Thylakoid</keyword>
<keyword id="KW-0812">Transmembrane</keyword>
<keyword id="KW-1133">Transmembrane helix</keyword>
<keyword id="KW-0813">Transport</keyword>
<accession>P58310</accession>
<sequence>MIIRSPEPEVKILVDRDPIKTSFEEWAKPGHFSRTIAKGPDTTTWIWNLHADAHDFDSHTSDLEDISRKIFSAHFGQLSIIFLWLSGMYFHGARFSNYEAWLSDPTHIRPSAQVVWPIVGQEILNGDVGGGFRGIQITSGFFQIWRASGITSELQLYCTAIGGLVFAALMLFAGWFHYHKAAPKLAWFQDVESMLNHHLAGLLGLGSLSWAGHQVHVSLPINQFLNAGVDPKEIPLPHEFILNRDLLAQLYPSFAEGATPFFTLNWAKYADFLTFRGGLDPVTGGLWLTDIAHHHLAIAILFLIAGHMYRTNWGIGHGIKDILEAHKGPFTGQGHKGLYEILTTSWHAQLSINLAMLGSLTIIVAHHMYSMPPYPYLATDYGTQLSLFTHHMWIGGFLIVGAAAHAAIFMVRDYDPTTRYNDLLDRVLRHRDAIISHLNWVCIFLGFHSFGLYIHNDTMSALGRPQDMFSDTAIQLQPIFAQWIQNTHALAPGITAPGATTGTSLTWGGGDLVAVGNKVALLPIPLGTADFLVHHIHAFTIHVTVLILLKGVLFARSSRLIPDKANLGFRFPCDGPGRGGTCQVSAWDHVFLGLFWMYNAISVVIFHFSWKMQSDVWGSISDQGVVTHITGGNFAQSSITINGWLRDFLWAQASQVIQSYGSSLSAYGLFFLGAHFVWAFSLMFLFSGRGYWQELIESIVWAHNKLKVAPATQPRALSIVQGRAVGVTHYLLGGIATTWAFFLARIIAVG</sequence>
<gene>
    <name evidence="1" type="primary">psaA</name>
</gene>
<proteinExistence type="inferred from homology"/>
<organism>
    <name type="scientific">Lotus japonicus</name>
    <name type="common">Lotus corniculatus var. japonicus</name>
    <dbReference type="NCBI Taxonomy" id="34305"/>
    <lineage>
        <taxon>Eukaryota</taxon>
        <taxon>Viridiplantae</taxon>
        <taxon>Streptophyta</taxon>
        <taxon>Embryophyta</taxon>
        <taxon>Tracheophyta</taxon>
        <taxon>Spermatophyta</taxon>
        <taxon>Magnoliopsida</taxon>
        <taxon>eudicotyledons</taxon>
        <taxon>Gunneridae</taxon>
        <taxon>Pentapetalae</taxon>
        <taxon>rosids</taxon>
        <taxon>fabids</taxon>
        <taxon>Fabales</taxon>
        <taxon>Fabaceae</taxon>
        <taxon>Papilionoideae</taxon>
        <taxon>50 kb inversion clade</taxon>
        <taxon>NPAAA clade</taxon>
        <taxon>Hologalegina</taxon>
        <taxon>robinioid clade</taxon>
        <taxon>Loteae</taxon>
        <taxon>Lotus</taxon>
    </lineage>
</organism>
<protein>
    <recommendedName>
        <fullName evidence="1">Photosystem I P700 chlorophyll a apoprotein A1</fullName>
        <ecNumber evidence="1">1.97.1.12</ecNumber>
    </recommendedName>
    <alternativeName>
        <fullName evidence="1">PSI-A</fullName>
    </alternativeName>
    <alternativeName>
        <fullName evidence="1">PsaA</fullName>
    </alternativeName>
</protein>
<name>PSAA_LOTJA</name>
<feature type="chain" id="PRO_0000088556" description="Photosystem I P700 chlorophyll a apoprotein A1">
    <location>
        <begin position="1"/>
        <end position="750"/>
    </location>
</feature>
<feature type="transmembrane region" description="Helical; Name=I" evidence="1">
    <location>
        <begin position="70"/>
        <end position="93"/>
    </location>
</feature>
<feature type="transmembrane region" description="Helical; Name=II" evidence="1">
    <location>
        <begin position="156"/>
        <end position="179"/>
    </location>
</feature>
<feature type="transmembrane region" description="Helical; Name=III" evidence="1">
    <location>
        <begin position="195"/>
        <end position="219"/>
    </location>
</feature>
<feature type="transmembrane region" description="Helical; Name=IV" evidence="1">
    <location>
        <begin position="291"/>
        <end position="309"/>
    </location>
</feature>
<feature type="transmembrane region" description="Helical; Name=V" evidence="1">
    <location>
        <begin position="346"/>
        <end position="369"/>
    </location>
</feature>
<feature type="transmembrane region" description="Helical; Name=VI" evidence="1">
    <location>
        <begin position="385"/>
        <end position="411"/>
    </location>
</feature>
<feature type="transmembrane region" description="Helical; Name=VII" evidence="1">
    <location>
        <begin position="433"/>
        <end position="455"/>
    </location>
</feature>
<feature type="transmembrane region" description="Helical; Name=VIII" evidence="1">
    <location>
        <begin position="531"/>
        <end position="549"/>
    </location>
</feature>
<feature type="transmembrane region" description="Helical; Name=IX" evidence="1">
    <location>
        <begin position="589"/>
        <end position="610"/>
    </location>
</feature>
<feature type="transmembrane region" description="Helical; Name=X" evidence="1">
    <location>
        <begin position="664"/>
        <end position="686"/>
    </location>
</feature>
<feature type="transmembrane region" description="Helical; Name=XI" evidence="1">
    <location>
        <begin position="724"/>
        <end position="744"/>
    </location>
</feature>
<feature type="binding site" evidence="1">
    <location>
        <position position="573"/>
    </location>
    <ligand>
        <name>[4Fe-4S] cluster</name>
        <dbReference type="ChEBI" id="CHEBI:49883"/>
        <note>ligand shared between dimeric partners</note>
    </ligand>
</feature>
<feature type="binding site" evidence="1">
    <location>
        <position position="582"/>
    </location>
    <ligand>
        <name>[4Fe-4S] cluster</name>
        <dbReference type="ChEBI" id="CHEBI:49883"/>
        <note>ligand shared between dimeric partners</note>
    </ligand>
</feature>
<feature type="binding site" description="axial binding residue" evidence="1">
    <location>
        <position position="675"/>
    </location>
    <ligand>
        <name>chlorophyll a'</name>
        <dbReference type="ChEBI" id="CHEBI:189419"/>
        <label>A1</label>
    </ligand>
    <ligandPart>
        <name>Mg</name>
        <dbReference type="ChEBI" id="CHEBI:25107"/>
    </ligandPart>
</feature>
<feature type="binding site" description="axial binding residue" evidence="1">
    <location>
        <position position="683"/>
    </location>
    <ligand>
        <name>chlorophyll a</name>
        <dbReference type="ChEBI" id="CHEBI:58416"/>
        <label>A3</label>
    </ligand>
    <ligandPart>
        <name>Mg</name>
        <dbReference type="ChEBI" id="CHEBI:25107"/>
    </ligandPart>
</feature>
<feature type="binding site" evidence="1">
    <location>
        <position position="691"/>
    </location>
    <ligand>
        <name>chlorophyll a</name>
        <dbReference type="ChEBI" id="CHEBI:58416"/>
        <label>A3</label>
    </ligand>
</feature>
<feature type="binding site" evidence="1">
    <location>
        <position position="692"/>
    </location>
    <ligand>
        <name>phylloquinone</name>
        <dbReference type="ChEBI" id="CHEBI:18067"/>
        <label>A</label>
    </ligand>
</feature>
<reference key="1">
    <citation type="journal article" date="2000" name="DNA Res.">
        <title>Complete structure of the chloroplast genome of a legume, Lotus japonicus.</title>
        <authorList>
            <person name="Kato T."/>
            <person name="Kaneko T."/>
            <person name="Sato S."/>
            <person name="Nakamura Y."/>
            <person name="Tabata S."/>
        </authorList>
    </citation>
    <scope>NUCLEOTIDE SEQUENCE [LARGE SCALE GENOMIC DNA]</scope>
    <source>
        <strain>cv. Miyakojima MG-20</strain>
    </source>
</reference>
<geneLocation type="chloroplast"/>